<gene>
    <name type="primary">div-1</name>
    <name type="ORF">R01H10.1/R01H10.2/Y70G10A.4</name>
</gene>
<keyword id="KW-0235">DNA replication</keyword>
<keyword id="KW-0539">Nucleus</keyword>
<keyword id="KW-1185">Reference proteome</keyword>
<name>DPOA2_CAEEL</name>
<dbReference type="EMBL" id="Z31590">
    <property type="protein sequence ID" value="CAA83467.2"/>
    <property type="molecule type" value="Genomic_DNA"/>
</dbReference>
<dbReference type="EMBL" id="AL032660">
    <property type="protein sequence ID" value="CAA83467.2"/>
    <property type="status" value="JOINED"/>
    <property type="molecule type" value="Genomic_DNA"/>
</dbReference>
<dbReference type="PIR" id="T27359">
    <property type="entry name" value="T27359"/>
</dbReference>
<dbReference type="RefSeq" id="NP_499268.1">
    <property type="nucleotide sequence ID" value="NM_066867.6"/>
</dbReference>
<dbReference type="SMR" id="Q21625"/>
<dbReference type="BioGRID" id="41633">
    <property type="interactions" value="4"/>
</dbReference>
<dbReference type="FunCoup" id="Q21625">
    <property type="interactions" value="1377"/>
</dbReference>
<dbReference type="IntAct" id="Q21625">
    <property type="interactions" value="1"/>
</dbReference>
<dbReference type="STRING" id="6239.R01H10.1.1"/>
<dbReference type="PaxDb" id="6239-R01H10.1"/>
<dbReference type="PeptideAtlas" id="Q21625"/>
<dbReference type="EnsemblMetazoa" id="R01H10.1.1">
    <property type="protein sequence ID" value="R01H10.1.1"/>
    <property type="gene ID" value="WBGene00001002"/>
</dbReference>
<dbReference type="GeneID" id="176439"/>
<dbReference type="KEGG" id="cel:CELE_R01H10.1"/>
<dbReference type="UCSC" id="R01H10.1">
    <property type="organism name" value="c. elegans"/>
</dbReference>
<dbReference type="AGR" id="WB:WBGene00001002"/>
<dbReference type="CTD" id="176439"/>
<dbReference type="WormBase" id="R01H10.1">
    <property type="protein sequence ID" value="CE28840"/>
    <property type="gene ID" value="WBGene00001002"/>
    <property type="gene designation" value="div-1"/>
</dbReference>
<dbReference type="eggNOG" id="KOG1625">
    <property type="taxonomic scope" value="Eukaryota"/>
</dbReference>
<dbReference type="GeneTree" id="ENSGT00390000016784"/>
<dbReference type="HOGENOM" id="CLU_014923_3_1_1"/>
<dbReference type="InParanoid" id="Q21625"/>
<dbReference type="OMA" id="QLADFMY"/>
<dbReference type="OrthoDB" id="336885at2759"/>
<dbReference type="PhylomeDB" id="Q21625"/>
<dbReference type="Reactome" id="R-CEL-113501">
    <property type="pathway name" value="Inhibition of replication initiation of damaged DNA by RB1/E2F1"/>
</dbReference>
<dbReference type="Reactome" id="R-CEL-68952">
    <property type="pathway name" value="DNA replication initiation"/>
</dbReference>
<dbReference type="Reactome" id="R-CEL-68962">
    <property type="pathway name" value="Activation of the pre-replicative complex"/>
</dbReference>
<dbReference type="Reactome" id="R-CEL-69091">
    <property type="pathway name" value="Polymerase switching"/>
</dbReference>
<dbReference type="Reactome" id="R-CEL-69166">
    <property type="pathway name" value="Removal of the Flap Intermediate"/>
</dbReference>
<dbReference type="Reactome" id="R-CEL-69183">
    <property type="pathway name" value="Processive synthesis on the lagging strand"/>
</dbReference>
<dbReference type="PRO" id="PR:Q21625"/>
<dbReference type="Proteomes" id="UP000001940">
    <property type="component" value="Chromosome III"/>
</dbReference>
<dbReference type="Bgee" id="WBGene00001002">
    <property type="expression patterns" value="Expressed in embryo and 4 other cell types or tissues"/>
</dbReference>
<dbReference type="GO" id="GO:0005658">
    <property type="term" value="C:alpha DNA polymerase:primase complex"/>
    <property type="evidence" value="ECO:0000318"/>
    <property type="project" value="GO_Central"/>
</dbReference>
<dbReference type="GO" id="GO:0003677">
    <property type="term" value="F:DNA binding"/>
    <property type="evidence" value="ECO:0007669"/>
    <property type="project" value="InterPro"/>
</dbReference>
<dbReference type="GO" id="GO:0006270">
    <property type="term" value="P:DNA replication initiation"/>
    <property type="evidence" value="ECO:0000318"/>
    <property type="project" value="GO_Central"/>
</dbReference>
<dbReference type="FunFam" id="3.60.21.60:FF:000015">
    <property type="entry name" value="DNA polymerase alpha subunit B"/>
    <property type="match status" value="1"/>
</dbReference>
<dbReference type="FunFam" id="3.60.21.60:FF:000019">
    <property type="entry name" value="DNA polymerase alpha subunit B"/>
    <property type="match status" value="1"/>
</dbReference>
<dbReference type="Gene3D" id="3.60.21.60">
    <property type="match status" value="2"/>
</dbReference>
<dbReference type="Gene3D" id="1.10.8.530">
    <property type="entry name" value="DNA polymerase alpha-primase, subunit B, N-terminal domain"/>
    <property type="match status" value="1"/>
</dbReference>
<dbReference type="InterPro" id="IPR007185">
    <property type="entry name" value="DNA_pol_a/d/e_bsu"/>
</dbReference>
<dbReference type="InterPro" id="IPR043034">
    <property type="entry name" value="DNA_pol_alpha_B_N_sf"/>
</dbReference>
<dbReference type="InterPro" id="IPR016722">
    <property type="entry name" value="DNA_pol_alpha_bsu"/>
</dbReference>
<dbReference type="InterPro" id="IPR054300">
    <property type="entry name" value="DPOA2_OB"/>
</dbReference>
<dbReference type="InterPro" id="IPR013627">
    <property type="entry name" value="Pol_alpha_B_N"/>
</dbReference>
<dbReference type="PANTHER" id="PTHR23061">
    <property type="entry name" value="DNA POLYMERASE 2 ALPHA 70 KDA SUBUNIT"/>
    <property type="match status" value="1"/>
</dbReference>
<dbReference type="PANTHER" id="PTHR23061:SF12">
    <property type="entry name" value="DNA POLYMERASE ALPHA SUBUNIT B"/>
    <property type="match status" value="1"/>
</dbReference>
<dbReference type="Pfam" id="PF04042">
    <property type="entry name" value="DNA_pol_E_B"/>
    <property type="match status" value="1"/>
</dbReference>
<dbReference type="Pfam" id="PF22062">
    <property type="entry name" value="DPOA2_OB"/>
    <property type="match status" value="1"/>
</dbReference>
<dbReference type="Pfam" id="PF08418">
    <property type="entry name" value="Pol_alpha_B_N"/>
    <property type="match status" value="1"/>
</dbReference>
<dbReference type="PIRSF" id="PIRSF018300">
    <property type="entry name" value="DNA_pol_alph_2"/>
    <property type="match status" value="1"/>
</dbReference>
<organism>
    <name type="scientific">Caenorhabditis elegans</name>
    <dbReference type="NCBI Taxonomy" id="6239"/>
    <lineage>
        <taxon>Eukaryota</taxon>
        <taxon>Metazoa</taxon>
        <taxon>Ecdysozoa</taxon>
        <taxon>Nematoda</taxon>
        <taxon>Chromadorea</taxon>
        <taxon>Rhabditida</taxon>
        <taxon>Rhabditina</taxon>
        <taxon>Rhabditomorpha</taxon>
        <taxon>Rhabditoidea</taxon>
        <taxon>Rhabditidae</taxon>
        <taxon>Peloderinae</taxon>
        <taxon>Caenorhabditis</taxon>
    </lineage>
</organism>
<comment type="function">
    <text evidence="2 3">May play an essential role at the early stage of chromosomal DNA replication by coupling the polymerase alpha/primase complex to the cellular replication machinery. Required for the distribution of pie-1 in cell divsion.</text>
</comment>
<comment type="subunit">
    <text evidence="1">DNA polymerase alpha:primase is a four subunit enzyme complex, which is assembled throughout the cell cycle, and consists of the two DNA polymerase subunits A and B, and the DNA primase large and small subunits. Subunit B binds to subunit A (By similarity).</text>
</comment>
<comment type="subcellular location">
    <subcellularLocation>
        <location>Nucleus</location>
    </subcellularLocation>
</comment>
<comment type="disruption phenotype">
    <text evidence="2 3">Delayed cell divisions/cytokinesis. Dysfunctional development of intestinal and pharyngeal cells. Mislocalization of p-granules to the nuclei at the 4- and 12-cell embryonic growth stages. Loss of cell polarity during cell divisions.</text>
</comment>
<comment type="similarity">
    <text evidence="4">Belongs to the DNA polymerase alpha subunit B family.</text>
</comment>
<accession>Q21625</accession>
<reference key="1">
    <citation type="journal article" date="1998" name="Science">
        <title>Genome sequence of the nematode C. elegans: a platform for investigating biology.</title>
        <authorList>
            <consortium name="The C. elegans sequencing consortium"/>
        </authorList>
    </citation>
    <scope>NUCLEOTIDE SEQUENCE [LARGE SCALE GENOMIC DNA]</scope>
    <source>
        <strain>Bristol N2</strain>
    </source>
</reference>
<reference key="2">
    <citation type="journal article" date="2000" name="Dev. Biol.">
        <title>DNA replication defects delay cell division and disrupt cell polarity in early Caenorhabditis elegans embryos.</title>
        <authorList>
            <person name="Encalada S.E."/>
            <person name="Martin P.R."/>
            <person name="Phillips J.B."/>
            <person name="Lyczak R."/>
            <person name="Hamill D.R."/>
            <person name="Swan K.A."/>
            <person name="Bowerman B."/>
        </authorList>
    </citation>
    <scope>FUNCTION</scope>
    <scope>DISRUPTION PHENOTYPE</scope>
</reference>
<reference key="3">
    <citation type="journal article" date="2003" name="Curr. Biol.">
        <title>Differential activation of the DNA replication checkpoint contributes to asynchrony of cell division in C. elegans embryos.</title>
        <authorList>
            <person name="Brauchle M."/>
            <person name="Baumer K."/>
            <person name="Goenczy P."/>
        </authorList>
    </citation>
    <scope>FUNCTION</scope>
    <scope>DISRUPTION PHENOTYPE</scope>
</reference>
<proteinExistence type="inferred from homology"/>
<sequence>MAYEFDLEDFNDNLEPFGFNCPAKDHFIEKLEGLCKTFRKSGEDIVDDVVSVMSNLGQKSVDSGILAKLEENLEAQAQKTVHTPRSVKKPARGRVPLAEKSGFILSGDPDDIEKPSHHLTNSAIAKLEGHFLDFSPFPGSPANEKFLKRADPSHVVTTIRGKKYQDKGLKGSTKSDDTIRIISKTPSTLYGGDKSSMVIEAKAQRMADIAHRIQKSFEEIVDWGNPSIPSVDVVYTYGQVIHDETKDNEKFGEHSVALMINDEDGTMIRMDFSKMTEDITLFPGQIIAVRGTNETGEELQVDKIFQPAALPVNPVETDTTKEIWFACGPYTATDNCGYEHLCELLDKVVAEKPDILMLAGPFVDKKNTFLNKPTFNITYDNLLEDLLLKVKETLVGTKTQVIIQPNASRDLCVPPVFPSAPFQQNRKLDKIKKELIFVADPCIFRISGVEVAMTSSEPIQALSNTEFHRSANQENIDRVARLSSHLLTQQCMYPLEPTEVPASMGDLLDVCCIGSTPHIVFAPTKLAPSAKCVNGSVFINSSTLAKGPTGNYAKMSINLNAGELMPGETVADYAQIQILKI</sequence>
<protein>
    <recommendedName>
        <fullName>DNA polymerase alpha subunit B</fullName>
    </recommendedName>
    <alternativeName>
        <fullName>Division delayed protein 1</fullName>
    </alternativeName>
</protein>
<evidence type="ECO:0000250" key="1"/>
<evidence type="ECO:0000269" key="2">
    <source>
    </source>
</evidence>
<evidence type="ECO:0000269" key="3">
    <source>
    </source>
</evidence>
<evidence type="ECO:0000305" key="4"/>
<feature type="chain" id="PRO_0000194038" description="DNA polymerase alpha subunit B">
    <location>
        <begin position="1"/>
        <end position="581"/>
    </location>
</feature>